<keyword id="KW-0963">Cytoplasm</keyword>
<keyword id="KW-0489">Methyltransferase</keyword>
<keyword id="KW-1185">Reference proteome</keyword>
<keyword id="KW-0698">rRNA processing</keyword>
<keyword id="KW-0949">S-adenosyl-L-methionine</keyword>
<keyword id="KW-0808">Transferase</keyword>
<reference key="1">
    <citation type="submission" date="2008-05" db="EMBL/GenBank/DDBJ databases">
        <title>Complete sequence of chromosome of Geobacter lovleyi SZ.</title>
        <authorList>
            <consortium name="US DOE Joint Genome Institute"/>
            <person name="Lucas S."/>
            <person name="Copeland A."/>
            <person name="Lapidus A."/>
            <person name="Glavina del Rio T."/>
            <person name="Dalin E."/>
            <person name="Tice H."/>
            <person name="Bruce D."/>
            <person name="Goodwin L."/>
            <person name="Pitluck S."/>
            <person name="Chertkov O."/>
            <person name="Meincke L."/>
            <person name="Brettin T."/>
            <person name="Detter J.C."/>
            <person name="Han C."/>
            <person name="Tapia R."/>
            <person name="Kuske C.R."/>
            <person name="Schmutz J."/>
            <person name="Larimer F."/>
            <person name="Land M."/>
            <person name="Hauser L."/>
            <person name="Kyrpides N."/>
            <person name="Mikhailova N."/>
            <person name="Sung Y."/>
            <person name="Fletcher K.E."/>
            <person name="Ritalahti K.M."/>
            <person name="Loeffler F.E."/>
            <person name="Richardson P."/>
        </authorList>
    </citation>
    <scope>NUCLEOTIDE SEQUENCE [LARGE SCALE GENOMIC DNA]</scope>
    <source>
        <strain>ATCC BAA-1151 / DSM 17278 / SZ</strain>
    </source>
</reference>
<protein>
    <recommendedName>
        <fullName evidence="1">Ribosomal RNA small subunit methyltransferase H</fullName>
        <ecNumber evidence="1">2.1.1.199</ecNumber>
    </recommendedName>
    <alternativeName>
        <fullName evidence="1">16S rRNA m(4)C1402 methyltransferase</fullName>
    </alternativeName>
    <alternativeName>
        <fullName evidence="1">rRNA (cytosine-N(4)-)-methyltransferase RsmH</fullName>
    </alternativeName>
</protein>
<organism>
    <name type="scientific">Trichlorobacter lovleyi (strain ATCC BAA-1151 / DSM 17278 / SZ)</name>
    <name type="common">Geobacter lovleyi</name>
    <dbReference type="NCBI Taxonomy" id="398767"/>
    <lineage>
        <taxon>Bacteria</taxon>
        <taxon>Pseudomonadati</taxon>
        <taxon>Thermodesulfobacteriota</taxon>
        <taxon>Desulfuromonadia</taxon>
        <taxon>Geobacterales</taxon>
        <taxon>Geobacteraceae</taxon>
        <taxon>Trichlorobacter</taxon>
    </lineage>
</organism>
<evidence type="ECO:0000255" key="1">
    <source>
        <dbReference type="HAMAP-Rule" id="MF_01007"/>
    </source>
</evidence>
<evidence type="ECO:0000256" key="2">
    <source>
        <dbReference type="SAM" id="MobiDB-lite"/>
    </source>
</evidence>
<gene>
    <name evidence="1" type="primary">rsmH</name>
    <name type="synonym">mraW</name>
    <name type="ordered locus">Glov_0678</name>
</gene>
<feature type="chain" id="PRO_0000386910" description="Ribosomal RNA small subunit methyltransferase H">
    <location>
        <begin position="1"/>
        <end position="313"/>
    </location>
</feature>
<feature type="region of interest" description="Disordered" evidence="2">
    <location>
        <begin position="289"/>
        <end position="313"/>
    </location>
</feature>
<feature type="binding site" evidence="1">
    <location>
        <begin position="34"/>
        <end position="36"/>
    </location>
    <ligand>
        <name>S-adenosyl-L-methionine</name>
        <dbReference type="ChEBI" id="CHEBI:59789"/>
    </ligand>
</feature>
<feature type="binding site" evidence="1">
    <location>
        <position position="54"/>
    </location>
    <ligand>
        <name>S-adenosyl-L-methionine</name>
        <dbReference type="ChEBI" id="CHEBI:59789"/>
    </ligand>
</feature>
<feature type="binding site" evidence="1">
    <location>
        <position position="81"/>
    </location>
    <ligand>
        <name>S-adenosyl-L-methionine</name>
        <dbReference type="ChEBI" id="CHEBI:59789"/>
    </ligand>
</feature>
<feature type="binding site" evidence="1">
    <location>
        <position position="102"/>
    </location>
    <ligand>
        <name>S-adenosyl-L-methionine</name>
        <dbReference type="ChEBI" id="CHEBI:59789"/>
    </ligand>
</feature>
<feature type="binding site" evidence="1">
    <location>
        <position position="109"/>
    </location>
    <ligand>
        <name>S-adenosyl-L-methionine</name>
        <dbReference type="ChEBI" id="CHEBI:59789"/>
    </ligand>
</feature>
<sequence length="313" mass="34400">MEEFHHLSVLAREVMEQLAPRPGGTYLDGTLGGGGHSELILEKIGPDGLLIGIDRDPAALAAASERLRRFGSCFRPLQGSFGDLAELLKQEGINTLDGLLLDLGVSSHQLDTDERGFSFRLDGPLDMRMDRSCGDSAADLLQDCSAGELEQIIKEFGEERWAKKIALRIVQTRQETPITTTLQLADLVAGTIPRRFHEERIHPATRTFQALRIAVNQELEQVEQGIRAGIAALKAGGRIAVISFHSLEDRIVKHLFREAATGCTCPPRMPYCVCNKKPQLRILTGRPVIAGPEETDRNPRARSAKLRAAEKLG</sequence>
<proteinExistence type="inferred from homology"/>
<name>RSMH_TRIL1</name>
<accession>B3E3Z0</accession>
<comment type="function">
    <text evidence="1">Specifically methylates the N4 position of cytidine in position 1402 (C1402) of 16S rRNA.</text>
</comment>
<comment type="catalytic activity">
    <reaction evidence="1">
        <text>cytidine(1402) in 16S rRNA + S-adenosyl-L-methionine = N(4)-methylcytidine(1402) in 16S rRNA + S-adenosyl-L-homocysteine + H(+)</text>
        <dbReference type="Rhea" id="RHEA:42928"/>
        <dbReference type="Rhea" id="RHEA-COMP:10286"/>
        <dbReference type="Rhea" id="RHEA-COMP:10287"/>
        <dbReference type="ChEBI" id="CHEBI:15378"/>
        <dbReference type="ChEBI" id="CHEBI:57856"/>
        <dbReference type="ChEBI" id="CHEBI:59789"/>
        <dbReference type="ChEBI" id="CHEBI:74506"/>
        <dbReference type="ChEBI" id="CHEBI:82748"/>
        <dbReference type="EC" id="2.1.1.199"/>
    </reaction>
</comment>
<comment type="subcellular location">
    <subcellularLocation>
        <location evidence="1">Cytoplasm</location>
    </subcellularLocation>
</comment>
<comment type="similarity">
    <text evidence="1">Belongs to the methyltransferase superfamily. RsmH family.</text>
</comment>
<dbReference type="EC" id="2.1.1.199" evidence="1"/>
<dbReference type="EMBL" id="CP001089">
    <property type="protein sequence ID" value="ACD94404.1"/>
    <property type="molecule type" value="Genomic_DNA"/>
</dbReference>
<dbReference type="RefSeq" id="WP_012468760.1">
    <property type="nucleotide sequence ID" value="NC_010814.1"/>
</dbReference>
<dbReference type="SMR" id="B3E3Z0"/>
<dbReference type="STRING" id="398767.Glov_0678"/>
<dbReference type="KEGG" id="glo:Glov_0678"/>
<dbReference type="eggNOG" id="COG0275">
    <property type="taxonomic scope" value="Bacteria"/>
</dbReference>
<dbReference type="HOGENOM" id="CLU_038422_2_0_7"/>
<dbReference type="OrthoDB" id="9806637at2"/>
<dbReference type="Proteomes" id="UP000002420">
    <property type="component" value="Chromosome"/>
</dbReference>
<dbReference type="GO" id="GO:0005737">
    <property type="term" value="C:cytoplasm"/>
    <property type="evidence" value="ECO:0007669"/>
    <property type="project" value="UniProtKB-SubCell"/>
</dbReference>
<dbReference type="GO" id="GO:0071424">
    <property type="term" value="F:rRNA (cytosine-N4-)-methyltransferase activity"/>
    <property type="evidence" value="ECO:0007669"/>
    <property type="project" value="UniProtKB-UniRule"/>
</dbReference>
<dbReference type="GO" id="GO:0070475">
    <property type="term" value="P:rRNA base methylation"/>
    <property type="evidence" value="ECO:0007669"/>
    <property type="project" value="UniProtKB-UniRule"/>
</dbReference>
<dbReference type="Gene3D" id="1.10.150.170">
    <property type="entry name" value="Putative methyltransferase TM0872, insert domain"/>
    <property type="match status" value="1"/>
</dbReference>
<dbReference type="Gene3D" id="3.40.50.150">
    <property type="entry name" value="Vaccinia Virus protein VP39"/>
    <property type="match status" value="1"/>
</dbReference>
<dbReference type="HAMAP" id="MF_01007">
    <property type="entry name" value="16SrRNA_methyltr_H"/>
    <property type="match status" value="1"/>
</dbReference>
<dbReference type="InterPro" id="IPR002903">
    <property type="entry name" value="RsmH"/>
</dbReference>
<dbReference type="InterPro" id="IPR023397">
    <property type="entry name" value="SAM-dep_MeTrfase_MraW_recog"/>
</dbReference>
<dbReference type="InterPro" id="IPR029063">
    <property type="entry name" value="SAM-dependent_MTases_sf"/>
</dbReference>
<dbReference type="NCBIfam" id="TIGR00006">
    <property type="entry name" value="16S rRNA (cytosine(1402)-N(4))-methyltransferase RsmH"/>
    <property type="match status" value="1"/>
</dbReference>
<dbReference type="PANTHER" id="PTHR11265:SF0">
    <property type="entry name" value="12S RRNA N4-METHYLCYTIDINE METHYLTRANSFERASE"/>
    <property type="match status" value="1"/>
</dbReference>
<dbReference type="PANTHER" id="PTHR11265">
    <property type="entry name" value="S-ADENOSYL-METHYLTRANSFERASE MRAW"/>
    <property type="match status" value="1"/>
</dbReference>
<dbReference type="Pfam" id="PF01795">
    <property type="entry name" value="Methyltransf_5"/>
    <property type="match status" value="1"/>
</dbReference>
<dbReference type="PIRSF" id="PIRSF004486">
    <property type="entry name" value="MraW"/>
    <property type="match status" value="1"/>
</dbReference>
<dbReference type="SUPFAM" id="SSF81799">
    <property type="entry name" value="Putative methyltransferase TM0872, insert domain"/>
    <property type="match status" value="1"/>
</dbReference>
<dbReference type="SUPFAM" id="SSF53335">
    <property type="entry name" value="S-adenosyl-L-methionine-dependent methyltransferases"/>
    <property type="match status" value="1"/>
</dbReference>